<accession>O95045</accession>
<accession>B3KV87</accession>
<gene>
    <name evidence="9" type="primary">UPP2</name>
</gene>
<organism>
    <name type="scientific">Homo sapiens</name>
    <name type="common">Human</name>
    <dbReference type="NCBI Taxonomy" id="9606"/>
    <lineage>
        <taxon>Eukaryota</taxon>
        <taxon>Metazoa</taxon>
        <taxon>Chordata</taxon>
        <taxon>Craniata</taxon>
        <taxon>Vertebrata</taxon>
        <taxon>Euteleostomi</taxon>
        <taxon>Mammalia</taxon>
        <taxon>Eutheria</taxon>
        <taxon>Euarchontoglires</taxon>
        <taxon>Primates</taxon>
        <taxon>Haplorrhini</taxon>
        <taxon>Catarrhini</taxon>
        <taxon>Hominidae</taxon>
        <taxon>Homo</taxon>
    </lineage>
</organism>
<keyword id="KW-0002">3D-structure</keyword>
<keyword id="KW-0025">Alternative splicing</keyword>
<keyword id="KW-1015">Disulfide bond</keyword>
<keyword id="KW-0328">Glycosyltransferase</keyword>
<keyword id="KW-1267">Proteomics identification</keyword>
<keyword id="KW-0676">Redox-active center</keyword>
<keyword id="KW-1185">Reference proteome</keyword>
<keyword id="KW-0808">Transferase</keyword>
<protein>
    <recommendedName>
        <fullName evidence="4">Uridine phosphorylase 2</fullName>
        <shortName evidence="4">UPase 2</shortName>
        <shortName evidence="4">UrdPase 2</shortName>
        <ecNumber evidence="1 2">2.4.2.3</ecNumber>
    </recommendedName>
</protein>
<comment type="function">
    <text evidence="1 2">Catalyzes the reversible phosphorylytic cleavage of uridine to uracil and ribose-1-phosphate which can then be utilized as carbon and energy sources or in the rescue of pyrimidine bases for nucleotide synthesis (PubMed:12849978, PubMed:21855639). Shows broad substrate specificity and can also accept deoxyuridine and other analogous compounds (PubMed:12849978).</text>
</comment>
<comment type="catalytic activity">
    <reaction evidence="1 2">
        <text>uridine + phosphate = alpha-D-ribose 1-phosphate + uracil</text>
        <dbReference type="Rhea" id="RHEA:24388"/>
        <dbReference type="ChEBI" id="CHEBI:16704"/>
        <dbReference type="ChEBI" id="CHEBI:17568"/>
        <dbReference type="ChEBI" id="CHEBI:43474"/>
        <dbReference type="ChEBI" id="CHEBI:57720"/>
        <dbReference type="EC" id="2.4.2.3"/>
    </reaction>
    <physiologicalReaction direction="left-to-right" evidence="7">
        <dbReference type="Rhea" id="RHEA:24389"/>
    </physiologicalReaction>
</comment>
<comment type="catalytic activity">
    <reaction evidence="1">
        <text>2'-deoxyuridine + phosphate = 2-deoxy-alpha-D-ribose 1-phosphate + uracil</text>
        <dbReference type="Rhea" id="RHEA:22824"/>
        <dbReference type="ChEBI" id="CHEBI:16450"/>
        <dbReference type="ChEBI" id="CHEBI:17568"/>
        <dbReference type="ChEBI" id="CHEBI:43474"/>
        <dbReference type="ChEBI" id="CHEBI:57259"/>
    </reaction>
    <physiologicalReaction direction="left-to-right" evidence="7">
        <dbReference type="Rhea" id="RHEA:22825"/>
    </physiologicalReaction>
</comment>
<comment type="activity regulation">
    <text evidence="2">A conditional disulfide bridge can form within the protein that dislocates a critical phosphate-coordinating arginine Arg-100 away from the active site, disabling the enzyme.</text>
</comment>
<comment type="biophysicochemical properties">
    <kinetics>
        <KM evidence="1">76 uM for uridine</KM>
        <KM evidence="1">300 uM for deoxyuridine</KM>
        <KM evidence="1">73 uM for thymidine</KM>
        <KM evidence="1">24 uM for 5-fluorouridine</KM>
        <KM evidence="1">427 uM for 5-fluoro-2(')-deoxyuridine</KM>
        <Vmax evidence="1">4.0 nmol/min/ug enzyme toward uridine</Vmax>
        <Vmax evidence="1">1.2 nmol/min/ug enzyme toward deoxyuridine</Vmax>
        <Vmax evidence="1">0.18 nmol/min/ug enzyme toward thymidine</Vmax>
        <Vmax evidence="1">1.6 nmol/min/ug enzyme toward 5-fluorouridine</Vmax>
        <Vmax evidence="1">0.8 nmol/min/ug enzyme toward 5-fluoro-2(')-deoxyuridine</Vmax>
    </kinetics>
</comment>
<comment type="pathway">
    <text evidence="1">Pyrimidine metabolism; UMP biosynthesis via salvage pathway; uracil from uridine (phosphorylase route): step 1/1.</text>
</comment>
<comment type="subunit">
    <text evidence="2 3">Homodimer.</text>
</comment>
<comment type="interaction">
    <interactant intactId="EBI-10191025">
        <id>O95045</id>
    </interactant>
    <interactant intactId="EBI-747107">
        <id>Q8IUQ4</id>
        <label>SIAH1</label>
    </interactant>
    <organismsDiffer>false</organismsDiffer>
    <experiments>3</experiments>
</comment>
<comment type="interaction">
    <interactant intactId="EBI-10191025">
        <id>O95045</id>
    </interactant>
    <interactant intactId="EBI-10191025">
        <id>O95045</id>
        <label>UPP2</label>
    </interactant>
    <organismsDiffer>false</organismsDiffer>
    <experiments>3</experiments>
</comment>
<comment type="interaction">
    <interactant intactId="EBI-11528386">
        <id>O95045-2</id>
    </interactant>
    <interactant intactId="EBI-739832">
        <id>Q8TBB1</id>
        <label>LNX1</label>
    </interactant>
    <organismsDiffer>false</organismsDiffer>
    <experiments>3</experiments>
</comment>
<comment type="interaction">
    <interactant intactId="EBI-11528386">
        <id>O95045-2</id>
    </interactant>
    <interactant intactId="EBI-16439278">
        <id>Q6FHY5</id>
        <label>MEOX2</label>
    </interactant>
    <organismsDiffer>false</organismsDiffer>
    <experiments>3</experiments>
</comment>
<comment type="interaction">
    <interactant intactId="EBI-11528386">
        <id>O95045-2</id>
    </interactant>
    <interactant intactId="EBI-723426">
        <id>Q13084</id>
        <label>MRPL28</label>
    </interactant>
    <organismsDiffer>false</organismsDiffer>
    <experiments>3</experiments>
</comment>
<comment type="interaction">
    <interactant intactId="EBI-11528386">
        <id>O95045-2</id>
    </interactant>
    <interactant intactId="EBI-11522811">
        <id>Q8IUQ4-2</id>
        <label>SIAH1</label>
    </interactant>
    <organismsDiffer>false</organismsDiffer>
    <experiments>6</experiments>
</comment>
<comment type="interaction">
    <interactant intactId="EBI-11528386">
        <id>O95045-2</id>
    </interactant>
    <interactant intactId="EBI-16432858">
        <id>A0A0S2Z6U5</id>
        <label>UPP2</label>
    </interactant>
    <organismsDiffer>false</organismsDiffer>
    <experiments>3</experiments>
</comment>
<comment type="interaction">
    <interactant intactId="EBI-11528386">
        <id>O95045-2</id>
    </interactant>
    <interactant intactId="EBI-11528386">
        <id>O95045-2</id>
        <label>UPP2</label>
    </interactant>
    <organismsDiffer>false</organismsDiffer>
    <experiments>6</experiments>
</comment>
<comment type="alternative products">
    <event type="alternative splicing"/>
    <isoform>
        <id>O95045-1</id>
        <name>1</name>
        <sequence type="displayed"/>
    </isoform>
    <isoform>
        <id>O95045-2</id>
        <name>2</name>
        <sequence type="described" ref="VSP_043756"/>
    </isoform>
</comment>
<comment type="tissue specificity">
    <text evidence="1">Predominantly expressed in kidney.</text>
</comment>
<comment type="similarity">
    <text evidence="6">Belongs to the PNP/UDP phosphorylase family.</text>
</comment>
<comment type="sequence caution" evidence="6">
    <conflict type="erroneous initiation">
        <sequence resource="EMBL-CDS" id="AAH33529"/>
    </conflict>
    <text>Truncated N-terminus.</text>
</comment>
<sequence>MASVIPASNRSMRSDRNTYVGKRFVHVKNPYLDLMDEDILYHLDLGTKTHNLPAMFGDVKFVCVGGSPNRMKAFALFMHKELGFEEAEEDIKDICAGTDRYCMYKTGPVLAISHGMGIPSISIMLHELIKLLHHARCCDVTIIRIGTSGGIGIAPGTVVITDIAVDSFFKPRFEQVILDNIVTRSTELDKELSEELFNCSKEIPNFPTLVGHTMCTYDFYEGQGRLDGALCSFSREKKLDYLKRAFKAGVRNIEMESTVFAAMCGLCGLKAAVVCVTLLDRLDCDQINLPHDVLVEYQQRPQLLISNFIRRRLGLCD</sequence>
<name>UPP2_HUMAN</name>
<feature type="chain" id="PRO_0000063193" description="Uridine phosphorylase 2">
    <location>
        <begin position="1"/>
        <end position="317"/>
    </location>
</feature>
<feature type="binding site" evidence="2 11">
    <location>
        <position position="66"/>
    </location>
    <ligand>
        <name>phosphate</name>
        <dbReference type="ChEBI" id="CHEBI:43474"/>
    </ligand>
</feature>
<feature type="binding site" evidence="2 11">
    <location>
        <position position="100"/>
    </location>
    <ligand>
        <name>phosphate</name>
        <dbReference type="ChEBI" id="CHEBI:43474"/>
    </ligand>
</feature>
<feature type="binding site" evidence="2 11">
    <location>
        <begin position="144"/>
        <end position="147"/>
    </location>
    <ligand>
        <name>phosphate</name>
        <dbReference type="ChEBI" id="CHEBI:43474"/>
    </ligand>
</feature>
<feature type="binding site" evidence="8 10 11 12">
    <location>
        <begin position="148"/>
        <end position="149"/>
    </location>
    <ligand>
        <name>uridine</name>
        <dbReference type="ChEBI" id="CHEBI:16704"/>
    </ligand>
</feature>
<feature type="binding site" evidence="8 10 11 12">
    <location>
        <begin position="223"/>
        <end position="225"/>
    </location>
    <ligand>
        <name>uridine</name>
        <dbReference type="ChEBI" id="CHEBI:16704"/>
    </ligand>
</feature>
<feature type="disulfide bond" description="Redox-active" evidence="2 12">
    <location>
        <begin position="95"/>
        <end position="102"/>
    </location>
</feature>
<feature type="splice variant" id="VSP_043756" description="In isoform 2." evidence="5">
    <original>M</original>
    <variation>MLAPGCELDPDQEVVRTRPEDVPASPSTSTMIVSVLRPPSHASCTACGTVTFHIVERM</variation>
    <location>
        <position position="1"/>
    </location>
</feature>
<feature type="sequence variant" id="VAR_024431" description="In dbSNP:rs6710480.">
    <original>R</original>
    <variation>S</variation>
    <location>
        <position position="10"/>
    </location>
</feature>
<feature type="sequence variant" id="VAR_034580" description="In dbSNP:rs7561584.">
    <original>M</original>
    <variation>L</variation>
    <location>
        <position position="78"/>
    </location>
</feature>
<feature type="sequence conflict" description="In Ref. 1; AAO61681." evidence="6" ref="1">
    <original>I</original>
    <variation>M</variation>
    <location>
        <position position="153"/>
    </location>
</feature>
<feature type="sequence conflict" description="In Ref. 1; AAO61681." evidence="6" ref="1">
    <original>T</original>
    <variation>R</variation>
    <location>
        <position position="157"/>
    </location>
</feature>
<feature type="sequence conflict" description="In Ref. 1; AAO61681." evidence="6" ref="1">
    <original>ESTVFAA</original>
    <variation>GIYSVCS</variation>
    <location>
        <begin position="256"/>
        <end position="262"/>
    </location>
</feature>
<feature type="helix" evidence="14">
    <location>
        <begin position="32"/>
        <end position="34"/>
    </location>
</feature>
<feature type="helix" evidence="14">
    <location>
        <begin position="41"/>
        <end position="43"/>
    </location>
</feature>
<feature type="turn" evidence="14">
    <location>
        <begin position="47"/>
        <end position="49"/>
    </location>
</feature>
<feature type="helix" evidence="14">
    <location>
        <begin position="52"/>
        <end position="56"/>
    </location>
</feature>
<feature type="strand" evidence="14">
    <location>
        <begin position="61"/>
        <end position="66"/>
    </location>
</feature>
<feature type="helix" evidence="14">
    <location>
        <begin position="68"/>
        <end position="82"/>
    </location>
</feature>
<feature type="helix" evidence="13">
    <location>
        <begin position="88"/>
        <end position="90"/>
    </location>
</feature>
<feature type="turn" evidence="13">
    <location>
        <begin position="94"/>
        <end position="97"/>
    </location>
</feature>
<feature type="strand" evidence="14">
    <location>
        <begin position="98"/>
        <end position="100"/>
    </location>
</feature>
<feature type="strand" evidence="14">
    <location>
        <begin position="103"/>
        <end position="106"/>
    </location>
</feature>
<feature type="strand" evidence="14">
    <location>
        <begin position="109"/>
        <end position="113"/>
    </location>
</feature>
<feature type="helix" evidence="14">
    <location>
        <begin position="118"/>
        <end position="134"/>
    </location>
</feature>
<feature type="strand" evidence="14">
    <location>
        <begin position="141"/>
        <end position="153"/>
    </location>
</feature>
<feature type="strand" evidence="14">
    <location>
        <begin position="158"/>
        <end position="165"/>
    </location>
</feature>
<feature type="strand" evidence="14">
    <location>
        <begin position="171"/>
        <end position="177"/>
    </location>
</feature>
<feature type="strand" evidence="14">
    <location>
        <begin position="180"/>
        <end position="185"/>
    </location>
</feature>
<feature type="helix" evidence="14">
    <location>
        <begin position="190"/>
        <end position="201"/>
    </location>
</feature>
<feature type="strand" evidence="14">
    <location>
        <begin position="208"/>
        <end position="215"/>
    </location>
</feature>
<feature type="helix" evidence="14">
    <location>
        <begin position="221"/>
        <end position="223"/>
    </location>
</feature>
<feature type="strand" evidence="14">
    <location>
        <begin position="226"/>
        <end position="229"/>
    </location>
</feature>
<feature type="helix" evidence="14">
    <location>
        <begin position="235"/>
        <end position="248"/>
    </location>
</feature>
<feature type="strand" evidence="14">
    <location>
        <begin position="250"/>
        <end position="256"/>
    </location>
</feature>
<feature type="helix" evidence="14">
    <location>
        <begin position="257"/>
        <end position="266"/>
    </location>
</feature>
<feature type="strand" evidence="14">
    <location>
        <begin position="270"/>
        <end position="280"/>
    </location>
</feature>
<feature type="turn" evidence="14">
    <location>
        <begin position="281"/>
        <end position="283"/>
    </location>
</feature>
<feature type="helix" evidence="14">
    <location>
        <begin position="291"/>
        <end position="298"/>
    </location>
</feature>
<feature type="helix" evidence="14">
    <location>
        <begin position="300"/>
        <end position="313"/>
    </location>
</feature>
<proteinExistence type="evidence at protein level"/>
<dbReference type="EC" id="2.4.2.3" evidence="1 2"/>
<dbReference type="EMBL" id="AY225131">
    <property type="protein sequence ID" value="AAO61681.1"/>
    <property type="molecule type" value="mRNA"/>
</dbReference>
<dbReference type="EMBL" id="AK122743">
    <property type="protein sequence ID" value="BAG53699.1"/>
    <property type="molecule type" value="mRNA"/>
</dbReference>
<dbReference type="EMBL" id="AC005539">
    <property type="protein sequence ID" value="AAD12227.1"/>
    <property type="molecule type" value="Genomic_DNA"/>
</dbReference>
<dbReference type="EMBL" id="BC033529">
    <property type="protein sequence ID" value="AAH33529.1"/>
    <property type="status" value="ALT_INIT"/>
    <property type="molecule type" value="mRNA"/>
</dbReference>
<dbReference type="CCDS" id="CCDS2207.1">
    <molecule id="O95045-1"/>
</dbReference>
<dbReference type="CCDS" id="CCDS46435.1">
    <molecule id="O95045-2"/>
</dbReference>
<dbReference type="RefSeq" id="NP_001128570.1">
    <molecule id="O95045-2"/>
    <property type="nucleotide sequence ID" value="NM_001135098.2"/>
</dbReference>
<dbReference type="RefSeq" id="NP_775491.1">
    <molecule id="O95045-1"/>
    <property type="nucleotide sequence ID" value="NM_173355.4"/>
</dbReference>
<dbReference type="PDB" id="2XRF">
    <property type="method" value="X-ray"/>
    <property type="resolution" value="2.30 A"/>
    <property type="chains" value="A/B/C=23-317"/>
</dbReference>
<dbReference type="PDB" id="3P0E">
    <property type="method" value="X-ray"/>
    <property type="resolution" value="2.00 A"/>
    <property type="chains" value="A/B/C/D/E/F=21-314"/>
</dbReference>
<dbReference type="PDB" id="3P0F">
    <property type="method" value="X-ray"/>
    <property type="resolution" value="1.54 A"/>
    <property type="chains" value="A=21-314"/>
</dbReference>
<dbReference type="PDBsum" id="2XRF"/>
<dbReference type="PDBsum" id="3P0E"/>
<dbReference type="PDBsum" id="3P0F"/>
<dbReference type="SMR" id="O95045"/>
<dbReference type="BioGRID" id="127387">
    <property type="interactions" value="9"/>
</dbReference>
<dbReference type="FunCoup" id="O95045">
    <property type="interactions" value="207"/>
</dbReference>
<dbReference type="IntAct" id="O95045">
    <property type="interactions" value="6"/>
</dbReference>
<dbReference type="STRING" id="9606.ENSP00000474090"/>
<dbReference type="DrugBank" id="DB01101">
    <property type="generic name" value="Capecitabine"/>
</dbReference>
<dbReference type="DrugBank" id="DB00544">
    <property type="generic name" value="Fluorouracil"/>
</dbReference>
<dbReference type="iPTMnet" id="O95045"/>
<dbReference type="PhosphoSitePlus" id="O95045"/>
<dbReference type="BioMuta" id="UPP2"/>
<dbReference type="MassIVE" id="O95045"/>
<dbReference type="PaxDb" id="9606-ENSP00000474090"/>
<dbReference type="PeptideAtlas" id="O95045"/>
<dbReference type="ProteomicsDB" id="50627">
    <molecule id="O95045-1"/>
</dbReference>
<dbReference type="ProteomicsDB" id="50628">
    <molecule id="O95045-2"/>
</dbReference>
<dbReference type="Antibodypedia" id="33709">
    <property type="antibodies" value="138 antibodies from 23 providers"/>
</dbReference>
<dbReference type="DNASU" id="151531"/>
<dbReference type="Ensembl" id="ENST00000005756.5">
    <molecule id="O95045-1"/>
    <property type="protein sequence ID" value="ENSP00000005756.5"/>
    <property type="gene ID" value="ENSG00000007001.14"/>
</dbReference>
<dbReference type="Ensembl" id="ENST00000605860.5">
    <molecule id="O95045-2"/>
    <property type="protein sequence ID" value="ENSP00000474090.1"/>
    <property type="gene ID" value="ENSG00000007001.14"/>
</dbReference>
<dbReference type="GeneID" id="151531"/>
<dbReference type="KEGG" id="hsa:151531"/>
<dbReference type="MANE-Select" id="ENST00000005756.5">
    <property type="protein sequence ID" value="ENSP00000005756.5"/>
    <property type="RefSeq nucleotide sequence ID" value="NM_173355.4"/>
    <property type="RefSeq protein sequence ID" value="NP_775491.1"/>
</dbReference>
<dbReference type="UCSC" id="uc002tzp.4">
    <molecule id="O95045-1"/>
    <property type="organism name" value="human"/>
</dbReference>
<dbReference type="AGR" id="HGNC:23061"/>
<dbReference type="CTD" id="151531"/>
<dbReference type="DisGeNET" id="151531"/>
<dbReference type="GeneCards" id="UPP2"/>
<dbReference type="HGNC" id="HGNC:23061">
    <property type="gene designation" value="UPP2"/>
</dbReference>
<dbReference type="HPA" id="ENSG00000007001">
    <property type="expression patterns" value="Group enriched (kidney, liver)"/>
</dbReference>
<dbReference type="MIM" id="617340">
    <property type="type" value="gene"/>
</dbReference>
<dbReference type="neXtProt" id="NX_O95045"/>
<dbReference type="OpenTargets" id="ENSG00000007001"/>
<dbReference type="PharmGKB" id="PA134866434"/>
<dbReference type="VEuPathDB" id="HostDB:ENSG00000007001"/>
<dbReference type="eggNOG" id="KOG3728">
    <property type="taxonomic scope" value="Eukaryota"/>
</dbReference>
<dbReference type="GeneTree" id="ENSGT00940000161094"/>
<dbReference type="HOGENOM" id="CLU_054104_0_0_1"/>
<dbReference type="InParanoid" id="O95045"/>
<dbReference type="OrthoDB" id="204058at2759"/>
<dbReference type="PAN-GO" id="O95045">
    <property type="GO annotations" value="3 GO annotations based on evolutionary models"/>
</dbReference>
<dbReference type="PhylomeDB" id="O95045"/>
<dbReference type="TreeFam" id="TF314310"/>
<dbReference type="BRENDA" id="2.4.2.3">
    <property type="organism ID" value="2681"/>
</dbReference>
<dbReference type="PathwayCommons" id="O95045"/>
<dbReference type="Reactome" id="R-HSA-73614">
    <property type="pathway name" value="Pyrimidine salvage"/>
</dbReference>
<dbReference type="Reactome" id="R-HSA-73621">
    <property type="pathway name" value="Pyrimidine catabolism"/>
</dbReference>
<dbReference type="SABIO-RK" id="O95045"/>
<dbReference type="SignaLink" id="O95045"/>
<dbReference type="UniPathway" id="UPA00574">
    <property type="reaction ID" value="UER00633"/>
</dbReference>
<dbReference type="BioGRID-ORCS" id="151531">
    <property type="hits" value="10 hits in 1160 CRISPR screens"/>
</dbReference>
<dbReference type="ChiTaRS" id="UPP2">
    <property type="organism name" value="human"/>
</dbReference>
<dbReference type="EvolutionaryTrace" id="O95045"/>
<dbReference type="GenomeRNAi" id="151531"/>
<dbReference type="Pharos" id="O95045">
    <property type="development level" value="Tbio"/>
</dbReference>
<dbReference type="PRO" id="PR:O95045"/>
<dbReference type="Proteomes" id="UP000005640">
    <property type="component" value="Chromosome 2"/>
</dbReference>
<dbReference type="RNAct" id="O95045">
    <property type="molecule type" value="protein"/>
</dbReference>
<dbReference type="Bgee" id="ENSG00000007001">
    <property type="expression patterns" value="Expressed in kidney epithelium and 59 other cell types or tissues"/>
</dbReference>
<dbReference type="ExpressionAtlas" id="O95045">
    <property type="expression patterns" value="baseline and differential"/>
</dbReference>
<dbReference type="GO" id="GO:0005829">
    <property type="term" value="C:cytosol"/>
    <property type="evidence" value="ECO:0000318"/>
    <property type="project" value="GO_Central"/>
</dbReference>
<dbReference type="GO" id="GO:0045098">
    <property type="term" value="C:type III intermediate filament"/>
    <property type="evidence" value="ECO:0000314"/>
    <property type="project" value="UniProtKB"/>
</dbReference>
<dbReference type="GO" id="GO:0047847">
    <property type="term" value="F:deoxyuridine phosphorylase activity"/>
    <property type="evidence" value="ECO:0000314"/>
    <property type="project" value="MGI"/>
</dbReference>
<dbReference type="GO" id="GO:0042802">
    <property type="term" value="F:identical protein binding"/>
    <property type="evidence" value="ECO:0000353"/>
    <property type="project" value="IntAct"/>
</dbReference>
<dbReference type="GO" id="GO:0004850">
    <property type="term" value="F:uridine phosphorylase activity"/>
    <property type="evidence" value="ECO:0000314"/>
    <property type="project" value="UniProtKB"/>
</dbReference>
<dbReference type="GO" id="GO:0006248">
    <property type="term" value="P:CMP catabolic process"/>
    <property type="evidence" value="ECO:0007669"/>
    <property type="project" value="Ensembl"/>
</dbReference>
<dbReference type="GO" id="GO:0006249">
    <property type="term" value="P:dCMP catabolic process"/>
    <property type="evidence" value="ECO:0000314"/>
    <property type="project" value="MGI"/>
</dbReference>
<dbReference type="GO" id="GO:0009116">
    <property type="term" value="P:nucleoside metabolic process"/>
    <property type="evidence" value="ECO:0000303"/>
    <property type="project" value="UniProtKB"/>
</dbReference>
<dbReference type="GO" id="GO:0046050">
    <property type="term" value="P:UMP catabolic process"/>
    <property type="evidence" value="ECO:0007669"/>
    <property type="project" value="Ensembl"/>
</dbReference>
<dbReference type="GO" id="GO:0044206">
    <property type="term" value="P:UMP salvage"/>
    <property type="evidence" value="ECO:0007669"/>
    <property type="project" value="UniProtKB-UniPathway"/>
</dbReference>
<dbReference type="GO" id="GO:0006218">
    <property type="term" value="P:uridine catabolic process"/>
    <property type="evidence" value="ECO:0000314"/>
    <property type="project" value="UniProtKB"/>
</dbReference>
<dbReference type="GO" id="GO:0046108">
    <property type="term" value="P:uridine metabolic process"/>
    <property type="evidence" value="ECO:0000303"/>
    <property type="project" value="UniProtKB"/>
</dbReference>
<dbReference type="CDD" id="cd17763">
    <property type="entry name" value="UP_hUPP-like"/>
    <property type="match status" value="1"/>
</dbReference>
<dbReference type="FunFam" id="3.40.50.1580:FF:000009">
    <property type="entry name" value="Uridine phosphorylase 2"/>
    <property type="match status" value="1"/>
</dbReference>
<dbReference type="Gene3D" id="3.40.50.1580">
    <property type="entry name" value="Nucleoside phosphorylase domain"/>
    <property type="match status" value="1"/>
</dbReference>
<dbReference type="InterPro" id="IPR018016">
    <property type="entry name" value="Nucleoside_phosphorylase_CS"/>
</dbReference>
<dbReference type="InterPro" id="IPR000845">
    <property type="entry name" value="Nucleoside_phosphorylase_d"/>
</dbReference>
<dbReference type="InterPro" id="IPR035994">
    <property type="entry name" value="Nucleoside_phosphorylase_sf"/>
</dbReference>
<dbReference type="InterPro" id="IPR010059">
    <property type="entry name" value="Uridine_phosphorylase_euk"/>
</dbReference>
<dbReference type="NCBIfam" id="TIGR01719">
    <property type="entry name" value="euk_UDPppase"/>
    <property type="match status" value="1"/>
</dbReference>
<dbReference type="PANTHER" id="PTHR43691">
    <property type="entry name" value="URIDINE PHOSPHORYLASE"/>
    <property type="match status" value="1"/>
</dbReference>
<dbReference type="PANTHER" id="PTHR43691:SF8">
    <property type="entry name" value="URIDINE PHOSPHORYLASE 2"/>
    <property type="match status" value="1"/>
</dbReference>
<dbReference type="Pfam" id="PF01048">
    <property type="entry name" value="PNP_UDP_1"/>
    <property type="match status" value="1"/>
</dbReference>
<dbReference type="SUPFAM" id="SSF53167">
    <property type="entry name" value="Purine and uridine phosphorylases"/>
    <property type="match status" value="1"/>
</dbReference>
<dbReference type="PROSITE" id="PS01232">
    <property type="entry name" value="PNP_UDP_1"/>
    <property type="match status" value="1"/>
</dbReference>
<reference key="1">
    <citation type="journal article" date="2003" name="Biochem. Biophys. Res. Commun.">
        <title>Identification of a novel human uridine phosphorylase.</title>
        <authorList>
            <person name="Johansson M."/>
        </authorList>
    </citation>
    <scope>NUCLEOTIDE SEQUENCE [MRNA] (ISOFORM 1)</scope>
    <scope>FUNCTION</scope>
    <scope>CATALYTIC ACTIVITY</scope>
    <scope>BIOPHYSICOCHEMICAL PROPERTIES</scope>
    <scope>PATHWAY</scope>
    <scope>TISSUE SPECIFICITY</scope>
</reference>
<reference key="2">
    <citation type="journal article" date="2004" name="Nat. Genet.">
        <title>Complete sequencing and characterization of 21,243 full-length human cDNAs.</title>
        <authorList>
            <person name="Ota T."/>
            <person name="Suzuki Y."/>
            <person name="Nishikawa T."/>
            <person name="Otsuki T."/>
            <person name="Sugiyama T."/>
            <person name="Irie R."/>
            <person name="Wakamatsu A."/>
            <person name="Hayashi K."/>
            <person name="Sato H."/>
            <person name="Nagai K."/>
            <person name="Kimura K."/>
            <person name="Makita H."/>
            <person name="Sekine M."/>
            <person name="Obayashi M."/>
            <person name="Nishi T."/>
            <person name="Shibahara T."/>
            <person name="Tanaka T."/>
            <person name="Ishii S."/>
            <person name="Yamamoto J."/>
            <person name="Saito K."/>
            <person name="Kawai Y."/>
            <person name="Isono Y."/>
            <person name="Nakamura Y."/>
            <person name="Nagahari K."/>
            <person name="Murakami K."/>
            <person name="Yasuda T."/>
            <person name="Iwayanagi T."/>
            <person name="Wagatsuma M."/>
            <person name="Shiratori A."/>
            <person name="Sudo H."/>
            <person name="Hosoiri T."/>
            <person name="Kaku Y."/>
            <person name="Kodaira H."/>
            <person name="Kondo H."/>
            <person name="Sugawara M."/>
            <person name="Takahashi M."/>
            <person name="Kanda K."/>
            <person name="Yokoi T."/>
            <person name="Furuya T."/>
            <person name="Kikkawa E."/>
            <person name="Omura Y."/>
            <person name="Abe K."/>
            <person name="Kamihara K."/>
            <person name="Katsuta N."/>
            <person name="Sato K."/>
            <person name="Tanikawa M."/>
            <person name="Yamazaki M."/>
            <person name="Ninomiya K."/>
            <person name="Ishibashi T."/>
            <person name="Yamashita H."/>
            <person name="Murakawa K."/>
            <person name="Fujimori K."/>
            <person name="Tanai H."/>
            <person name="Kimata M."/>
            <person name="Watanabe M."/>
            <person name="Hiraoka S."/>
            <person name="Chiba Y."/>
            <person name="Ishida S."/>
            <person name="Ono Y."/>
            <person name="Takiguchi S."/>
            <person name="Watanabe S."/>
            <person name="Yosida M."/>
            <person name="Hotuta T."/>
            <person name="Kusano J."/>
            <person name="Kanehori K."/>
            <person name="Takahashi-Fujii A."/>
            <person name="Hara H."/>
            <person name="Tanase T.-O."/>
            <person name="Nomura Y."/>
            <person name="Togiya S."/>
            <person name="Komai F."/>
            <person name="Hara R."/>
            <person name="Takeuchi K."/>
            <person name="Arita M."/>
            <person name="Imose N."/>
            <person name="Musashino K."/>
            <person name="Yuuki H."/>
            <person name="Oshima A."/>
            <person name="Sasaki N."/>
            <person name="Aotsuka S."/>
            <person name="Yoshikawa Y."/>
            <person name="Matsunawa H."/>
            <person name="Ichihara T."/>
            <person name="Shiohata N."/>
            <person name="Sano S."/>
            <person name="Moriya S."/>
            <person name="Momiyama H."/>
            <person name="Satoh N."/>
            <person name="Takami S."/>
            <person name="Terashima Y."/>
            <person name="Suzuki O."/>
            <person name="Nakagawa S."/>
            <person name="Senoh A."/>
            <person name="Mizoguchi H."/>
            <person name="Goto Y."/>
            <person name="Shimizu F."/>
            <person name="Wakebe H."/>
            <person name="Hishigaki H."/>
            <person name="Watanabe T."/>
            <person name="Sugiyama A."/>
            <person name="Takemoto M."/>
            <person name="Kawakami B."/>
            <person name="Yamazaki M."/>
            <person name="Watanabe K."/>
            <person name="Kumagai A."/>
            <person name="Itakura S."/>
            <person name="Fukuzumi Y."/>
            <person name="Fujimori Y."/>
            <person name="Komiyama M."/>
            <person name="Tashiro H."/>
            <person name="Tanigami A."/>
            <person name="Fujiwara T."/>
            <person name="Ono T."/>
            <person name="Yamada K."/>
            <person name="Fujii Y."/>
            <person name="Ozaki K."/>
            <person name="Hirao M."/>
            <person name="Ohmori Y."/>
            <person name="Kawabata A."/>
            <person name="Hikiji T."/>
            <person name="Kobatake N."/>
            <person name="Inagaki H."/>
            <person name="Ikema Y."/>
            <person name="Okamoto S."/>
            <person name="Okitani R."/>
            <person name="Kawakami T."/>
            <person name="Noguchi S."/>
            <person name="Itoh T."/>
            <person name="Shigeta K."/>
            <person name="Senba T."/>
            <person name="Matsumura K."/>
            <person name="Nakajima Y."/>
            <person name="Mizuno T."/>
            <person name="Morinaga M."/>
            <person name="Sasaki M."/>
            <person name="Togashi T."/>
            <person name="Oyama M."/>
            <person name="Hata H."/>
            <person name="Watanabe M."/>
            <person name="Komatsu T."/>
            <person name="Mizushima-Sugano J."/>
            <person name="Satoh T."/>
            <person name="Shirai Y."/>
            <person name="Takahashi Y."/>
            <person name="Nakagawa K."/>
            <person name="Okumura K."/>
            <person name="Nagase T."/>
            <person name="Nomura N."/>
            <person name="Kikuchi H."/>
            <person name="Masuho Y."/>
            <person name="Yamashita R."/>
            <person name="Nakai K."/>
            <person name="Yada T."/>
            <person name="Nakamura Y."/>
            <person name="Ohara O."/>
            <person name="Isogai T."/>
            <person name="Sugano S."/>
        </authorList>
    </citation>
    <scope>NUCLEOTIDE SEQUENCE [LARGE SCALE MRNA] (ISOFORM 1)</scope>
    <source>
        <tissue>Kidney</tissue>
    </source>
</reference>
<reference key="3">
    <citation type="journal article" date="2005" name="Nature">
        <title>Generation and annotation of the DNA sequences of human chromosomes 2 and 4.</title>
        <authorList>
            <person name="Hillier L.W."/>
            <person name="Graves T.A."/>
            <person name="Fulton R.S."/>
            <person name="Fulton L.A."/>
            <person name="Pepin K.H."/>
            <person name="Minx P."/>
            <person name="Wagner-McPherson C."/>
            <person name="Layman D."/>
            <person name="Wylie K."/>
            <person name="Sekhon M."/>
            <person name="Becker M.C."/>
            <person name="Fewell G.A."/>
            <person name="Delehaunty K.D."/>
            <person name="Miner T.L."/>
            <person name="Nash W.E."/>
            <person name="Kremitzki C."/>
            <person name="Oddy L."/>
            <person name="Du H."/>
            <person name="Sun H."/>
            <person name="Bradshaw-Cordum H."/>
            <person name="Ali J."/>
            <person name="Carter J."/>
            <person name="Cordes M."/>
            <person name="Harris A."/>
            <person name="Isak A."/>
            <person name="van Brunt A."/>
            <person name="Nguyen C."/>
            <person name="Du F."/>
            <person name="Courtney L."/>
            <person name="Kalicki J."/>
            <person name="Ozersky P."/>
            <person name="Abbott S."/>
            <person name="Armstrong J."/>
            <person name="Belter E.A."/>
            <person name="Caruso L."/>
            <person name="Cedroni M."/>
            <person name="Cotton M."/>
            <person name="Davidson T."/>
            <person name="Desai A."/>
            <person name="Elliott G."/>
            <person name="Erb T."/>
            <person name="Fronick C."/>
            <person name="Gaige T."/>
            <person name="Haakenson W."/>
            <person name="Haglund K."/>
            <person name="Holmes A."/>
            <person name="Harkins R."/>
            <person name="Kim K."/>
            <person name="Kruchowski S.S."/>
            <person name="Strong C.M."/>
            <person name="Grewal N."/>
            <person name="Goyea E."/>
            <person name="Hou S."/>
            <person name="Levy A."/>
            <person name="Martinka S."/>
            <person name="Mead K."/>
            <person name="McLellan M.D."/>
            <person name="Meyer R."/>
            <person name="Randall-Maher J."/>
            <person name="Tomlinson C."/>
            <person name="Dauphin-Kohlberg S."/>
            <person name="Kozlowicz-Reilly A."/>
            <person name="Shah N."/>
            <person name="Swearengen-Shahid S."/>
            <person name="Snider J."/>
            <person name="Strong J.T."/>
            <person name="Thompson J."/>
            <person name="Yoakum M."/>
            <person name="Leonard S."/>
            <person name="Pearman C."/>
            <person name="Trani L."/>
            <person name="Radionenko M."/>
            <person name="Waligorski J.E."/>
            <person name="Wang C."/>
            <person name="Rock S.M."/>
            <person name="Tin-Wollam A.-M."/>
            <person name="Maupin R."/>
            <person name="Latreille P."/>
            <person name="Wendl M.C."/>
            <person name="Yang S.-P."/>
            <person name="Pohl C."/>
            <person name="Wallis J.W."/>
            <person name="Spieth J."/>
            <person name="Bieri T.A."/>
            <person name="Berkowicz N."/>
            <person name="Nelson J.O."/>
            <person name="Osborne J."/>
            <person name="Ding L."/>
            <person name="Meyer R."/>
            <person name="Sabo A."/>
            <person name="Shotland Y."/>
            <person name="Sinha P."/>
            <person name="Wohldmann P.E."/>
            <person name="Cook L.L."/>
            <person name="Hickenbotham M.T."/>
            <person name="Eldred J."/>
            <person name="Williams D."/>
            <person name="Jones T.A."/>
            <person name="She X."/>
            <person name="Ciccarelli F.D."/>
            <person name="Izaurralde E."/>
            <person name="Taylor J."/>
            <person name="Schmutz J."/>
            <person name="Myers R.M."/>
            <person name="Cox D.R."/>
            <person name="Huang X."/>
            <person name="McPherson J.D."/>
            <person name="Mardis E.R."/>
            <person name="Clifton S.W."/>
            <person name="Warren W.C."/>
            <person name="Chinwalla A.T."/>
            <person name="Eddy S.R."/>
            <person name="Marra M.A."/>
            <person name="Ovcharenko I."/>
            <person name="Furey T.S."/>
            <person name="Miller W."/>
            <person name="Eichler E.E."/>
            <person name="Bork P."/>
            <person name="Suyama M."/>
            <person name="Torrents D."/>
            <person name="Waterston R.H."/>
            <person name="Wilson R.K."/>
        </authorList>
    </citation>
    <scope>NUCLEOTIDE SEQUENCE [LARGE SCALE GENOMIC DNA]</scope>
</reference>
<reference key="4">
    <citation type="journal article" date="2004" name="Genome Res.">
        <title>The status, quality, and expansion of the NIH full-length cDNA project: the Mammalian Gene Collection (MGC).</title>
        <authorList>
            <consortium name="The MGC Project Team"/>
        </authorList>
    </citation>
    <scope>NUCLEOTIDE SEQUENCE [LARGE SCALE MRNA] (ISOFORM 2)</scope>
    <source>
        <tissue>Brain</tissue>
    </source>
</reference>
<reference evidence="10" key="5">
    <citation type="submission" date="2010-09" db="PDB data bank">
        <title>Crystal structure of human uridine phosphorylase 2.</title>
        <authorList>
            <person name="Welin M."/>
            <person name="Moche M."/>
            <person name="Arrowsmith C.H."/>
            <person name="Berglund H."/>
            <person name="Bountra C."/>
            <person name="Collins R."/>
            <person name="Edwards A.M."/>
            <person name="Flodin S."/>
            <person name="Flores A."/>
            <person name="Graslund S."/>
            <person name="Hammarstrom M."/>
            <person name="Johansson I."/>
            <person name="Karlberg T."/>
            <person name="Kol S."/>
            <person name="Kotenyova T."/>
            <person name="Kouznetsova E."/>
            <person name="Nyman T."/>
            <person name="Persson C."/>
            <person name="Schuler H."/>
            <person name="Schutz P."/>
            <person name="Siponen M.I."/>
            <person name="Thorsell A.G."/>
            <person name="Tresaugues L."/>
            <person name="Van Der Berg S."/>
            <person name="Wahlberg E."/>
            <person name="Weigelt J."/>
            <person name="Nordlund P."/>
        </authorList>
    </citation>
    <scope>X-RAY CRYSTALLOGRAPHY (2.30 ANGSTROMS) OF 23-317 IN COMPLEX WITH URACIL</scope>
    <scope>SUBUNIT</scope>
</reference>
<reference evidence="11 12" key="6">
    <citation type="journal article" date="2011" name="J. Struct. Biol.">
        <title>A novel structural mechanism for redox regulation of uridine phosphorylase 2 activity.</title>
        <authorList>
            <person name="Roosild T.P."/>
            <person name="Castronovo S."/>
            <person name="Villoso A."/>
            <person name="Ziemba A."/>
            <person name="Pizzorno G."/>
        </authorList>
    </citation>
    <scope>X-RAY CRYSTALLOGRAPHY (1.54 ANGSTROMS) OF 21-314 IN COMPLEX WITH PHOSPHATE AND INHIBITOR BAU</scope>
    <scope>FUNCTION</scope>
    <scope>CATALYTIC ACTIVITY</scope>
    <scope>ACTIVITY REGULATION</scope>
    <scope>SUBUNIT</scope>
    <scope>DISULFIDE BOND</scope>
</reference>
<evidence type="ECO:0000269" key="1">
    <source>
    </source>
</evidence>
<evidence type="ECO:0000269" key="2">
    <source>
    </source>
</evidence>
<evidence type="ECO:0000269" key="3">
    <source ref="5"/>
</evidence>
<evidence type="ECO:0000303" key="4">
    <source>
    </source>
</evidence>
<evidence type="ECO:0000303" key="5">
    <source>
    </source>
</evidence>
<evidence type="ECO:0000305" key="6"/>
<evidence type="ECO:0000305" key="7">
    <source>
    </source>
</evidence>
<evidence type="ECO:0000305" key="8">
    <source>
    </source>
</evidence>
<evidence type="ECO:0000312" key="9">
    <source>
        <dbReference type="HGNC" id="HGNC:23061"/>
    </source>
</evidence>
<evidence type="ECO:0007744" key="10">
    <source>
        <dbReference type="PDB" id="2XRF"/>
    </source>
</evidence>
<evidence type="ECO:0007744" key="11">
    <source>
        <dbReference type="PDB" id="3P0E"/>
    </source>
</evidence>
<evidence type="ECO:0007744" key="12">
    <source>
        <dbReference type="PDB" id="3P0F"/>
    </source>
</evidence>
<evidence type="ECO:0007829" key="13">
    <source>
        <dbReference type="PDB" id="3P0E"/>
    </source>
</evidence>
<evidence type="ECO:0007829" key="14">
    <source>
        <dbReference type="PDB" id="3P0F"/>
    </source>
</evidence>